<name>PER1_ORYSJ</name>
<accession>P37834</accession>
<accession>Q0DH04</accession>
<accession>Q6AUX0</accession>
<gene>
    <name type="primary">PRX74</name>
    <name type="ordered locus">Os05g0499300</name>
    <name type="ordered locus">LOC_Os05g41990</name>
    <name type="ORF">OJ1057_B02.6</name>
    <name evidence="5" type="ORF">OsJ_19081</name>
</gene>
<dbReference type="EC" id="1.11.1.7"/>
<dbReference type="EMBL" id="D14997">
    <property type="protein sequence ID" value="BAA03644.1"/>
    <property type="molecule type" value="mRNA"/>
</dbReference>
<dbReference type="EMBL" id="AC113332">
    <property type="protein sequence ID" value="AAT93858.1"/>
    <property type="molecule type" value="Genomic_DNA"/>
</dbReference>
<dbReference type="EMBL" id="AP008211">
    <property type="protein sequence ID" value="BAF17869.1"/>
    <property type="molecule type" value="Genomic_DNA"/>
</dbReference>
<dbReference type="EMBL" id="AP014961">
    <property type="protein sequence ID" value="BAS94744.1"/>
    <property type="molecule type" value="Genomic_DNA"/>
</dbReference>
<dbReference type="EMBL" id="CM000142">
    <property type="protein sequence ID" value="EEE64248.1"/>
    <property type="molecule type" value="Genomic_DNA"/>
</dbReference>
<dbReference type="EMBL" id="AK066855">
    <property type="protein sequence ID" value="BAG90155.1"/>
    <property type="molecule type" value="mRNA"/>
</dbReference>
<dbReference type="EMBL" id="AK104950">
    <property type="protein sequence ID" value="BAG97037.1"/>
    <property type="molecule type" value="mRNA"/>
</dbReference>
<dbReference type="EMBL" id="BN000603">
    <property type="protein sequence ID" value="CAH69316.1"/>
    <property type="molecule type" value="Genomic_DNA"/>
</dbReference>
<dbReference type="PIR" id="T03928">
    <property type="entry name" value="T03928"/>
</dbReference>
<dbReference type="RefSeq" id="XP_015639141.1">
    <property type="nucleotide sequence ID" value="XM_015783655.1"/>
</dbReference>
<dbReference type="SMR" id="P37834"/>
<dbReference type="FunCoup" id="P37834">
    <property type="interactions" value="182"/>
</dbReference>
<dbReference type="STRING" id="39947.P37834"/>
<dbReference type="PeroxiBase" id="1084">
    <property type="entry name" value="OsPrx74"/>
</dbReference>
<dbReference type="GlyCosmos" id="P37834">
    <property type="glycosylation" value="5 sites, No reported glycans"/>
</dbReference>
<dbReference type="PaxDb" id="39947-P37834"/>
<dbReference type="EnsemblPlants" id="Os05t0499300-01">
    <property type="protein sequence ID" value="Os05t0499300-01"/>
    <property type="gene ID" value="Os05g0499300"/>
</dbReference>
<dbReference type="Gramene" id="Os05t0499300-01">
    <property type="protein sequence ID" value="Os05t0499300-01"/>
    <property type="gene ID" value="Os05g0499300"/>
</dbReference>
<dbReference type="KEGG" id="dosa:Os05g0499300"/>
<dbReference type="eggNOG" id="ENOG502QQVF">
    <property type="taxonomic scope" value="Eukaryota"/>
</dbReference>
<dbReference type="HOGENOM" id="CLU_010543_0_3_1"/>
<dbReference type="InParanoid" id="P37834"/>
<dbReference type="OMA" id="MYMARLR"/>
<dbReference type="OrthoDB" id="619911at2759"/>
<dbReference type="Proteomes" id="UP000000763">
    <property type="component" value="Chromosome 5"/>
</dbReference>
<dbReference type="Proteomes" id="UP000007752">
    <property type="component" value="Chromosome 5"/>
</dbReference>
<dbReference type="Proteomes" id="UP000059680">
    <property type="component" value="Chromosome 5"/>
</dbReference>
<dbReference type="GO" id="GO:0005576">
    <property type="term" value="C:extracellular region"/>
    <property type="evidence" value="ECO:0007669"/>
    <property type="project" value="UniProtKB-SubCell"/>
</dbReference>
<dbReference type="GO" id="GO:0009505">
    <property type="term" value="C:plant-type cell wall"/>
    <property type="evidence" value="ECO:0000318"/>
    <property type="project" value="GO_Central"/>
</dbReference>
<dbReference type="GO" id="GO:0020037">
    <property type="term" value="F:heme binding"/>
    <property type="evidence" value="ECO:0007669"/>
    <property type="project" value="InterPro"/>
</dbReference>
<dbReference type="GO" id="GO:0140825">
    <property type="term" value="F:lactoperoxidase activity"/>
    <property type="evidence" value="ECO:0007669"/>
    <property type="project" value="UniProtKB-EC"/>
</dbReference>
<dbReference type="GO" id="GO:0046872">
    <property type="term" value="F:metal ion binding"/>
    <property type="evidence" value="ECO:0007669"/>
    <property type="project" value="UniProtKB-KW"/>
</dbReference>
<dbReference type="GO" id="GO:0004601">
    <property type="term" value="F:peroxidase activity"/>
    <property type="evidence" value="ECO:0000318"/>
    <property type="project" value="GO_Central"/>
</dbReference>
<dbReference type="GO" id="GO:0042744">
    <property type="term" value="P:hydrogen peroxide catabolic process"/>
    <property type="evidence" value="ECO:0007669"/>
    <property type="project" value="UniProtKB-KW"/>
</dbReference>
<dbReference type="GO" id="GO:0006979">
    <property type="term" value="P:response to oxidative stress"/>
    <property type="evidence" value="ECO:0007669"/>
    <property type="project" value="InterPro"/>
</dbReference>
<dbReference type="GO" id="GO:0006950">
    <property type="term" value="P:response to stress"/>
    <property type="evidence" value="ECO:0000318"/>
    <property type="project" value="GO_Central"/>
</dbReference>
<dbReference type="CDD" id="cd00693">
    <property type="entry name" value="secretory_peroxidase"/>
    <property type="match status" value="1"/>
</dbReference>
<dbReference type="FunFam" id="1.10.420.10:FF:000008">
    <property type="entry name" value="Peroxidase"/>
    <property type="match status" value="1"/>
</dbReference>
<dbReference type="FunFam" id="1.10.520.10:FF:000001">
    <property type="entry name" value="Peroxidase"/>
    <property type="match status" value="1"/>
</dbReference>
<dbReference type="Gene3D" id="1.10.520.10">
    <property type="match status" value="1"/>
</dbReference>
<dbReference type="Gene3D" id="1.10.420.10">
    <property type="entry name" value="Peroxidase, domain 2"/>
    <property type="match status" value="1"/>
</dbReference>
<dbReference type="InterPro" id="IPR002016">
    <property type="entry name" value="Haem_peroxidase"/>
</dbReference>
<dbReference type="InterPro" id="IPR010255">
    <property type="entry name" value="Haem_peroxidase_sf"/>
</dbReference>
<dbReference type="InterPro" id="IPR000823">
    <property type="entry name" value="Peroxidase_pln"/>
</dbReference>
<dbReference type="InterPro" id="IPR019794">
    <property type="entry name" value="Peroxidases_AS"/>
</dbReference>
<dbReference type="InterPro" id="IPR019793">
    <property type="entry name" value="Peroxidases_heam-ligand_BS"/>
</dbReference>
<dbReference type="InterPro" id="IPR033905">
    <property type="entry name" value="Secretory_peroxidase"/>
</dbReference>
<dbReference type="PANTHER" id="PTHR31235">
    <property type="entry name" value="PEROXIDASE 25-RELATED"/>
    <property type="match status" value="1"/>
</dbReference>
<dbReference type="Pfam" id="PF00141">
    <property type="entry name" value="peroxidase"/>
    <property type="match status" value="1"/>
</dbReference>
<dbReference type="PRINTS" id="PR00458">
    <property type="entry name" value="PEROXIDASE"/>
</dbReference>
<dbReference type="PRINTS" id="PR00461">
    <property type="entry name" value="PLPEROXIDASE"/>
</dbReference>
<dbReference type="SUPFAM" id="SSF48113">
    <property type="entry name" value="Heme-dependent peroxidases"/>
    <property type="match status" value="1"/>
</dbReference>
<dbReference type="PROSITE" id="PS00435">
    <property type="entry name" value="PEROXIDASE_1"/>
    <property type="match status" value="1"/>
</dbReference>
<dbReference type="PROSITE" id="PS00436">
    <property type="entry name" value="PEROXIDASE_2"/>
    <property type="match status" value="1"/>
</dbReference>
<dbReference type="PROSITE" id="PS50873">
    <property type="entry name" value="PEROXIDASE_4"/>
    <property type="match status" value="1"/>
</dbReference>
<comment type="function">
    <text>Removal of H(2)O(2), oxidation of toxic reductants, biosynthesis and degradation of lignin, suberization, auxin catabolism, response to environmental stresses such as wounding, pathogen attack and oxidative stress. These functions might be dependent on each isozyme/isoform in each plant tissue.</text>
</comment>
<comment type="catalytic activity">
    <reaction>
        <text>2 a phenolic donor + H2O2 = 2 a phenolic radical donor + 2 H2O</text>
        <dbReference type="Rhea" id="RHEA:56136"/>
        <dbReference type="ChEBI" id="CHEBI:15377"/>
        <dbReference type="ChEBI" id="CHEBI:16240"/>
        <dbReference type="ChEBI" id="CHEBI:139520"/>
        <dbReference type="ChEBI" id="CHEBI:139521"/>
        <dbReference type="EC" id="1.11.1.7"/>
    </reaction>
</comment>
<comment type="cofactor">
    <cofactor>
        <name>Ca(2+)</name>
        <dbReference type="ChEBI" id="CHEBI:29108"/>
    </cofactor>
    <text>Binds 2 calcium ions per subunit.</text>
</comment>
<comment type="cofactor">
    <cofactor>
        <name>heme b</name>
        <dbReference type="ChEBI" id="CHEBI:60344"/>
    </cofactor>
    <text>Binds 1 heme b (iron(II)-protoporphyrin IX) group per subunit.</text>
</comment>
<comment type="subcellular location">
    <subcellularLocation>
        <location evidence="2">Secreted</location>
    </subcellularLocation>
</comment>
<comment type="similarity">
    <text evidence="2">Belongs to the peroxidase family. Classical plant (class III) peroxidase subfamily.</text>
</comment>
<evidence type="ECO:0000255" key="1"/>
<evidence type="ECO:0000255" key="2">
    <source>
        <dbReference type="PROSITE-ProRule" id="PRU00297"/>
    </source>
</evidence>
<evidence type="ECO:0000255" key="3">
    <source>
        <dbReference type="PROSITE-ProRule" id="PRU10012"/>
    </source>
</evidence>
<evidence type="ECO:0000305" key="4"/>
<evidence type="ECO:0000312" key="5">
    <source>
        <dbReference type="EMBL" id="EEE64248.1"/>
    </source>
</evidence>
<feature type="signal peptide" evidence="1">
    <location>
        <begin position="1"/>
        <end position="22"/>
    </location>
</feature>
<feature type="chain" id="PRO_0000023753" description="Peroxidase 1">
    <location>
        <begin position="23"/>
        <end position="326"/>
    </location>
</feature>
<feature type="active site" description="Proton acceptor" evidence="2 3">
    <location>
        <position position="64"/>
    </location>
</feature>
<feature type="binding site" evidence="2">
    <location>
        <position position="65"/>
    </location>
    <ligand>
        <name>Ca(2+)</name>
        <dbReference type="ChEBI" id="CHEBI:29108"/>
        <label>1</label>
    </ligand>
</feature>
<feature type="binding site" evidence="2">
    <location>
        <position position="68"/>
    </location>
    <ligand>
        <name>Ca(2+)</name>
        <dbReference type="ChEBI" id="CHEBI:29108"/>
        <label>1</label>
    </ligand>
</feature>
<feature type="binding site" evidence="2">
    <location>
        <position position="70"/>
    </location>
    <ligand>
        <name>Ca(2+)</name>
        <dbReference type="ChEBI" id="CHEBI:29108"/>
        <label>1</label>
    </ligand>
</feature>
<feature type="binding site" evidence="2">
    <location>
        <position position="72"/>
    </location>
    <ligand>
        <name>Ca(2+)</name>
        <dbReference type="ChEBI" id="CHEBI:29108"/>
        <label>1</label>
    </ligand>
</feature>
<feature type="binding site" evidence="2">
    <location>
        <position position="74"/>
    </location>
    <ligand>
        <name>Ca(2+)</name>
        <dbReference type="ChEBI" id="CHEBI:29108"/>
        <label>1</label>
    </ligand>
</feature>
<feature type="binding site" evidence="2">
    <location>
        <position position="159"/>
    </location>
    <ligand>
        <name>substrate</name>
    </ligand>
</feature>
<feature type="binding site" description="axial binding residue" evidence="2">
    <location>
        <position position="189"/>
    </location>
    <ligand>
        <name>heme b</name>
        <dbReference type="ChEBI" id="CHEBI:60344"/>
    </ligand>
    <ligandPart>
        <name>Fe</name>
        <dbReference type="ChEBI" id="CHEBI:18248"/>
    </ligandPart>
</feature>
<feature type="binding site" evidence="2">
    <location>
        <position position="190"/>
    </location>
    <ligand>
        <name>Ca(2+)</name>
        <dbReference type="ChEBI" id="CHEBI:29108"/>
        <label>2</label>
    </ligand>
</feature>
<feature type="binding site" evidence="2">
    <location>
        <position position="244"/>
    </location>
    <ligand>
        <name>Ca(2+)</name>
        <dbReference type="ChEBI" id="CHEBI:29108"/>
        <label>2</label>
    </ligand>
</feature>
<feature type="binding site" evidence="2">
    <location>
        <position position="247"/>
    </location>
    <ligand>
        <name>Ca(2+)</name>
        <dbReference type="ChEBI" id="CHEBI:29108"/>
        <label>2</label>
    </ligand>
</feature>
<feature type="binding site" evidence="2">
    <location>
        <position position="252"/>
    </location>
    <ligand>
        <name>Ca(2+)</name>
        <dbReference type="ChEBI" id="CHEBI:29108"/>
        <label>2</label>
    </ligand>
</feature>
<feature type="site" description="Transition state stabilizer" evidence="2">
    <location>
        <position position="60"/>
    </location>
</feature>
<feature type="modified residue" description="Pyrrolidone carboxylic acid" evidence="2">
    <location>
        <position position="23"/>
    </location>
</feature>
<feature type="glycosylation site" description="N-linked (GlcNAc...) asparagine" evidence="1">
    <location>
        <position position="82"/>
    </location>
</feature>
<feature type="glycosylation site" description="N-linked (GlcNAc...) asparagine" evidence="1">
    <location>
        <position position="153"/>
    </location>
</feature>
<feature type="glycosylation site" description="N-linked (GlcNAc...) asparagine" evidence="1">
    <location>
        <position position="164"/>
    </location>
</feature>
<feature type="glycosylation site" description="N-linked (GlcNAc...) asparagine" evidence="1">
    <location>
        <position position="205"/>
    </location>
</feature>
<feature type="glycosylation site" description="N-linked (GlcNAc...) asparagine" evidence="1">
    <location>
        <position position="237"/>
    </location>
</feature>
<feature type="disulfide bond" evidence="2">
    <location>
        <begin position="33"/>
        <end position="112"/>
    </location>
</feature>
<feature type="disulfide bond" evidence="2">
    <location>
        <begin position="66"/>
        <end position="71"/>
    </location>
</feature>
<feature type="disulfide bond" evidence="2">
    <location>
        <begin position="118"/>
        <end position="322"/>
    </location>
</feature>
<feature type="disulfide bond" evidence="2">
    <location>
        <begin position="196"/>
        <end position="231"/>
    </location>
</feature>
<feature type="sequence conflict" description="In Ref. 1; BAA03644." evidence="4" ref="1">
    <original>A</original>
    <variation>R</variation>
    <location>
        <position position="50"/>
    </location>
</feature>
<sequence length="326" mass="35308">MASSRVILALLLAAAAVMASSAQLDEKFYSNSCPSVEAVVRKEMVRALGAAPSLAGPLLRMHFHDCFVRGCDGSVLLDSAGNSTAEKDATPNQTLRGFGFVERVKAAVEKACPGTVSCADVLALMARDAVWLSKGPFWAVPLGRRDGRVSIANETDQLPPPTANFTELTQMFAAKNLDLKDLVVLSAGHTIGTSHCFSFTDRLYNFTGLDNAHDIDPTLELQYMARLRSKCTSLQDNTTLVEMDPGSFKTFDLGYFKNVAKRRGLFHSDGELLTNGFTRAYVQRHAGGGYKDEFFADFAASMVKMGGVEVLTGSQGEIRKKCNVVN</sequence>
<organism>
    <name type="scientific">Oryza sativa subsp. japonica</name>
    <name type="common">Rice</name>
    <dbReference type="NCBI Taxonomy" id="39947"/>
    <lineage>
        <taxon>Eukaryota</taxon>
        <taxon>Viridiplantae</taxon>
        <taxon>Streptophyta</taxon>
        <taxon>Embryophyta</taxon>
        <taxon>Tracheophyta</taxon>
        <taxon>Spermatophyta</taxon>
        <taxon>Magnoliopsida</taxon>
        <taxon>Liliopsida</taxon>
        <taxon>Poales</taxon>
        <taxon>Poaceae</taxon>
        <taxon>BOP clade</taxon>
        <taxon>Oryzoideae</taxon>
        <taxon>Oryzeae</taxon>
        <taxon>Oryzinae</taxon>
        <taxon>Oryza</taxon>
        <taxon>Oryza sativa</taxon>
    </lineage>
</organism>
<keyword id="KW-0106">Calcium</keyword>
<keyword id="KW-1015">Disulfide bond</keyword>
<keyword id="KW-0325">Glycoprotein</keyword>
<keyword id="KW-0349">Heme</keyword>
<keyword id="KW-0376">Hydrogen peroxide</keyword>
<keyword id="KW-0408">Iron</keyword>
<keyword id="KW-0479">Metal-binding</keyword>
<keyword id="KW-0560">Oxidoreductase</keyword>
<keyword id="KW-0575">Peroxidase</keyword>
<keyword id="KW-0873">Pyrrolidone carboxylic acid</keyword>
<keyword id="KW-1185">Reference proteome</keyword>
<keyword id="KW-0964">Secreted</keyword>
<keyword id="KW-0732">Signal</keyword>
<proteinExistence type="evidence at transcript level"/>
<protein>
    <recommendedName>
        <fullName>Peroxidase 1</fullName>
        <ecNumber>1.11.1.7</ecNumber>
    </recommendedName>
</protein>
<reference key="1">
    <citation type="submission" date="1993-04" db="EMBL/GenBank/DDBJ databases">
        <title>Peroxidase from rice cDNA.</title>
        <authorList>
            <person name="Hori M."/>
            <person name="Sasaki T."/>
            <person name="Minobe Y."/>
        </authorList>
    </citation>
    <scope>NUCLEOTIDE SEQUENCE [MRNA]</scope>
    <source>
        <strain>cv. Nipponbare</strain>
        <tissue>Root</tissue>
    </source>
</reference>
<reference key="2">
    <citation type="journal article" date="2005" name="Mol. Genet. Genomics">
        <title>A fine physical map of the rice chromosome 5.</title>
        <authorList>
            <person name="Cheng C.-H."/>
            <person name="Chung M.C."/>
            <person name="Liu S.-M."/>
            <person name="Chen S.-K."/>
            <person name="Kao F.Y."/>
            <person name="Lin S.-J."/>
            <person name="Hsiao S.-H."/>
            <person name="Tseng I.C."/>
            <person name="Hsing Y.-I.C."/>
            <person name="Wu H.-P."/>
            <person name="Chen C.-S."/>
            <person name="Shaw J.-F."/>
            <person name="Wu J."/>
            <person name="Matsumoto T."/>
            <person name="Sasaki T."/>
            <person name="Chen H.-C."/>
            <person name="Chow T.-Y."/>
        </authorList>
    </citation>
    <scope>NUCLEOTIDE SEQUENCE [LARGE SCALE GENOMIC DNA]</scope>
    <source>
        <strain>cv. Nipponbare</strain>
    </source>
</reference>
<reference key="3">
    <citation type="journal article" date="2005" name="Nature">
        <title>The map-based sequence of the rice genome.</title>
        <authorList>
            <consortium name="International rice genome sequencing project (IRGSP)"/>
        </authorList>
    </citation>
    <scope>NUCLEOTIDE SEQUENCE [LARGE SCALE GENOMIC DNA]</scope>
    <source>
        <strain>cv. Nipponbare</strain>
    </source>
</reference>
<reference key="4">
    <citation type="journal article" date="2008" name="Nucleic Acids Res.">
        <title>The rice annotation project database (RAP-DB): 2008 update.</title>
        <authorList>
            <consortium name="The rice annotation project (RAP)"/>
        </authorList>
    </citation>
    <scope>GENOME REANNOTATION</scope>
    <source>
        <strain>cv. Nipponbare</strain>
    </source>
</reference>
<reference key="5">
    <citation type="journal article" date="2013" name="Rice">
        <title>Improvement of the Oryza sativa Nipponbare reference genome using next generation sequence and optical map data.</title>
        <authorList>
            <person name="Kawahara Y."/>
            <person name="de la Bastide M."/>
            <person name="Hamilton J.P."/>
            <person name="Kanamori H."/>
            <person name="McCombie W.R."/>
            <person name="Ouyang S."/>
            <person name="Schwartz D.C."/>
            <person name="Tanaka T."/>
            <person name="Wu J."/>
            <person name="Zhou S."/>
            <person name="Childs K.L."/>
            <person name="Davidson R.M."/>
            <person name="Lin H."/>
            <person name="Quesada-Ocampo L."/>
            <person name="Vaillancourt B."/>
            <person name="Sakai H."/>
            <person name="Lee S.S."/>
            <person name="Kim J."/>
            <person name="Numa H."/>
            <person name="Itoh T."/>
            <person name="Buell C.R."/>
            <person name="Matsumoto T."/>
        </authorList>
    </citation>
    <scope>GENOME REANNOTATION</scope>
    <source>
        <strain>cv. Nipponbare</strain>
    </source>
</reference>
<reference key="6">
    <citation type="journal article" date="2005" name="PLoS Biol.">
        <title>The genomes of Oryza sativa: a history of duplications.</title>
        <authorList>
            <person name="Yu J."/>
            <person name="Wang J."/>
            <person name="Lin W."/>
            <person name="Li S."/>
            <person name="Li H."/>
            <person name="Zhou J."/>
            <person name="Ni P."/>
            <person name="Dong W."/>
            <person name="Hu S."/>
            <person name="Zeng C."/>
            <person name="Zhang J."/>
            <person name="Zhang Y."/>
            <person name="Li R."/>
            <person name="Xu Z."/>
            <person name="Li S."/>
            <person name="Li X."/>
            <person name="Zheng H."/>
            <person name="Cong L."/>
            <person name="Lin L."/>
            <person name="Yin J."/>
            <person name="Geng J."/>
            <person name="Li G."/>
            <person name="Shi J."/>
            <person name="Liu J."/>
            <person name="Lv H."/>
            <person name="Li J."/>
            <person name="Wang J."/>
            <person name="Deng Y."/>
            <person name="Ran L."/>
            <person name="Shi X."/>
            <person name="Wang X."/>
            <person name="Wu Q."/>
            <person name="Li C."/>
            <person name="Ren X."/>
            <person name="Wang J."/>
            <person name="Wang X."/>
            <person name="Li D."/>
            <person name="Liu D."/>
            <person name="Zhang X."/>
            <person name="Ji Z."/>
            <person name="Zhao W."/>
            <person name="Sun Y."/>
            <person name="Zhang Z."/>
            <person name="Bao J."/>
            <person name="Han Y."/>
            <person name="Dong L."/>
            <person name="Ji J."/>
            <person name="Chen P."/>
            <person name="Wu S."/>
            <person name="Liu J."/>
            <person name="Xiao Y."/>
            <person name="Bu D."/>
            <person name="Tan J."/>
            <person name="Yang L."/>
            <person name="Ye C."/>
            <person name="Zhang J."/>
            <person name="Xu J."/>
            <person name="Zhou Y."/>
            <person name="Yu Y."/>
            <person name="Zhang B."/>
            <person name="Zhuang S."/>
            <person name="Wei H."/>
            <person name="Liu B."/>
            <person name="Lei M."/>
            <person name="Yu H."/>
            <person name="Li Y."/>
            <person name="Xu H."/>
            <person name="Wei S."/>
            <person name="He X."/>
            <person name="Fang L."/>
            <person name="Zhang Z."/>
            <person name="Zhang Y."/>
            <person name="Huang X."/>
            <person name="Su Z."/>
            <person name="Tong W."/>
            <person name="Li J."/>
            <person name="Tong Z."/>
            <person name="Li S."/>
            <person name="Ye J."/>
            <person name="Wang L."/>
            <person name="Fang L."/>
            <person name="Lei T."/>
            <person name="Chen C.-S."/>
            <person name="Chen H.-C."/>
            <person name="Xu Z."/>
            <person name="Li H."/>
            <person name="Huang H."/>
            <person name="Zhang F."/>
            <person name="Xu H."/>
            <person name="Li N."/>
            <person name="Zhao C."/>
            <person name="Li S."/>
            <person name="Dong L."/>
            <person name="Huang Y."/>
            <person name="Li L."/>
            <person name="Xi Y."/>
            <person name="Qi Q."/>
            <person name="Li W."/>
            <person name="Zhang B."/>
            <person name="Hu W."/>
            <person name="Zhang Y."/>
            <person name="Tian X."/>
            <person name="Jiao Y."/>
            <person name="Liang X."/>
            <person name="Jin J."/>
            <person name="Gao L."/>
            <person name="Zheng W."/>
            <person name="Hao B."/>
            <person name="Liu S.-M."/>
            <person name="Wang W."/>
            <person name="Yuan L."/>
            <person name="Cao M."/>
            <person name="McDermott J."/>
            <person name="Samudrala R."/>
            <person name="Wang J."/>
            <person name="Wong G.K.-S."/>
            <person name="Yang H."/>
        </authorList>
    </citation>
    <scope>NUCLEOTIDE SEQUENCE [LARGE SCALE GENOMIC DNA]</scope>
    <source>
        <strain>cv. Nipponbare</strain>
    </source>
</reference>
<reference key="7">
    <citation type="journal article" date="2003" name="Science">
        <title>Collection, mapping, and annotation of over 28,000 cDNA clones from japonica rice.</title>
        <authorList>
            <consortium name="The rice full-length cDNA consortium"/>
        </authorList>
    </citation>
    <scope>NUCLEOTIDE SEQUENCE [LARGE SCALE MRNA]</scope>
    <source>
        <strain>cv. Nipponbare</strain>
    </source>
</reference>
<reference key="8">
    <citation type="journal article" date="2004" name="Phytochemistry">
        <title>The class III peroxidase multigenic family in rice and its evolution in land plants.</title>
        <authorList>
            <person name="Passardi F."/>
            <person name="Longet D."/>
            <person name="Penel C."/>
            <person name="Dunand C."/>
        </authorList>
    </citation>
    <scope>IDENTIFICATION</scope>
    <source>
        <strain>cv. Nipponbare</strain>
    </source>
</reference>